<protein>
    <recommendedName>
        <fullName evidence="2">Polymerase acidic protein</fullName>
        <ecNumber evidence="2">3.1.-.-</ecNumber>
    </recommendedName>
    <alternativeName>
        <fullName evidence="2">RNA-directed RNA polymerase subunit P2</fullName>
    </alternativeName>
</protein>
<comment type="function">
    <text evidence="2">Plays an essential role in viral RNA transcription and replication by forming the heterotrimeric polymerase complex together with PB1 and PB2 subunits. The complex transcribes viral mRNAs by using a unique mechanism called cap-snatching. It consists in the hijacking and cleavage of host capped pre-mRNAs. These short capped RNAs are then used as primers for viral mRNAs. The PB2 subunit is responsible for the binding of the 5' cap of cellular pre-mRNAs which are subsequently cleaved after 10-13 nucleotides by the PA subunit that carries the endonuclease activity.</text>
</comment>
<comment type="cofactor">
    <cofactor evidence="2">
        <name>Mn(2+)</name>
        <dbReference type="ChEBI" id="CHEBI:29035"/>
    </cofactor>
    <text evidence="2">Binds 2 manganese ions per subunit.</text>
</comment>
<comment type="subunit">
    <text evidence="1 2">Influenza RNA polymerase is composed of three subunits: PB1, PB2 and PA. Interacts (via C-terminus) with PB1 (via N-terminus).</text>
</comment>
<comment type="subcellular location">
    <subcellularLocation>
        <location evidence="2">Host cytoplasm</location>
    </subcellularLocation>
    <subcellularLocation>
        <location evidence="2">Host nucleus</location>
    </subcellularLocation>
    <text evidence="1 2">PB1 and PA are transported in the host nucleus as a complex.</text>
</comment>
<comment type="alternative products">
    <event type="ribosomal frameshifting"/>
    <isoform>
        <id>Q809J3-1</id>
        <name>PA</name>
        <sequence type="displayed"/>
    </isoform>
    <isoform>
        <id>P0CK72-1</id>
        <name>PA-X</name>
        <sequence type="external"/>
    </isoform>
</comment>
<comment type="PTM">
    <text evidence="1 2">Phosphorylated on serines and threonines by host kinases, including human casein kinase II.</text>
</comment>
<comment type="similarity">
    <text evidence="2">Belongs to the influenza viruses PA family.</text>
</comment>
<comment type="sequence caution">
    <conflict type="frameshift">
        <sequence resource="EMBL-CDS" id="AAO53047"/>
    </conflict>
</comment>
<dbReference type="EC" id="3.1.-.-" evidence="2"/>
<dbReference type="EMBL" id="AF509204">
    <property type="protein sequence ID" value="AAO53047.2"/>
    <property type="status" value="ALT_FRAME"/>
    <property type="molecule type" value="Genomic_DNA"/>
</dbReference>
<dbReference type="PDB" id="6IRL">
    <property type="method" value="X-ray"/>
    <property type="resolution" value="2.10 A"/>
    <property type="chains" value="C=124-131"/>
</dbReference>
<dbReference type="PDBsum" id="6IRL"/>
<dbReference type="SMR" id="Q809J3"/>
<dbReference type="MEROPS" id="S62.001"/>
<dbReference type="GO" id="GO:0030430">
    <property type="term" value="C:host cell cytoplasm"/>
    <property type="evidence" value="ECO:0007669"/>
    <property type="project" value="UniProtKB-SubCell"/>
</dbReference>
<dbReference type="GO" id="GO:0042025">
    <property type="term" value="C:host cell nucleus"/>
    <property type="evidence" value="ECO:0007669"/>
    <property type="project" value="UniProtKB-SubCell"/>
</dbReference>
<dbReference type="GO" id="GO:0004519">
    <property type="term" value="F:endonuclease activity"/>
    <property type="evidence" value="ECO:0007669"/>
    <property type="project" value="UniProtKB-KW"/>
</dbReference>
<dbReference type="GO" id="GO:0046872">
    <property type="term" value="F:metal ion binding"/>
    <property type="evidence" value="ECO:0007669"/>
    <property type="project" value="UniProtKB-KW"/>
</dbReference>
<dbReference type="GO" id="GO:0003723">
    <property type="term" value="F:RNA binding"/>
    <property type="evidence" value="ECO:0007669"/>
    <property type="project" value="UniProtKB-UniRule"/>
</dbReference>
<dbReference type="GO" id="GO:0075526">
    <property type="term" value="P:cap snatching"/>
    <property type="evidence" value="ECO:0007669"/>
    <property type="project" value="UniProtKB-UniRule"/>
</dbReference>
<dbReference type="GO" id="GO:0006351">
    <property type="term" value="P:DNA-templated transcription"/>
    <property type="evidence" value="ECO:0007669"/>
    <property type="project" value="UniProtKB-UniRule"/>
</dbReference>
<dbReference type="GO" id="GO:0039657">
    <property type="term" value="P:symbiont-mediated suppression of host gene expression"/>
    <property type="evidence" value="ECO:0007669"/>
    <property type="project" value="UniProtKB-KW"/>
</dbReference>
<dbReference type="GO" id="GO:0039523">
    <property type="term" value="P:symbiont-mediated suppression of host mRNA transcription via inhibition of RNA polymerase II activity"/>
    <property type="evidence" value="ECO:0007669"/>
    <property type="project" value="UniProtKB-UniRule"/>
</dbReference>
<dbReference type="GO" id="GO:0039694">
    <property type="term" value="P:viral RNA genome replication"/>
    <property type="evidence" value="ECO:0007669"/>
    <property type="project" value="InterPro"/>
</dbReference>
<dbReference type="GO" id="GO:0075523">
    <property type="term" value="P:viral translational frameshifting"/>
    <property type="evidence" value="ECO:0007669"/>
    <property type="project" value="UniProtKB-KW"/>
</dbReference>
<dbReference type="FunFam" id="3.40.91.90:FF:000001">
    <property type="entry name" value="Polymerase acidic protein"/>
    <property type="match status" value="1"/>
</dbReference>
<dbReference type="Gene3D" id="3.40.91.90">
    <property type="entry name" value="Influenza RNA-dependent RNA polymerase subunit PA, endonuclease domain"/>
    <property type="match status" value="1"/>
</dbReference>
<dbReference type="HAMAP" id="MF_04063">
    <property type="entry name" value="INFV_PA"/>
    <property type="match status" value="1"/>
</dbReference>
<dbReference type="InterPro" id="IPR037534">
    <property type="entry name" value="INFV_PA"/>
</dbReference>
<dbReference type="InterPro" id="IPR001009">
    <property type="entry name" value="PA/PA-X"/>
</dbReference>
<dbReference type="InterPro" id="IPR038372">
    <property type="entry name" value="PA/PA-X_sf"/>
</dbReference>
<dbReference type="Pfam" id="PF00603">
    <property type="entry name" value="Flu_PA"/>
    <property type="match status" value="1"/>
</dbReference>
<reference key="1">
    <citation type="journal article" date="2002" name="Proc. Natl. Acad. Sci. U.S.A.">
        <title>Emergence of multiple genotypes of H5N1 avian influenza viruses in Hong Kong SAR.</title>
        <authorList>
            <person name="Guan Y."/>
            <person name="Peiris J.S.M."/>
            <person name="Lipatov A.S."/>
            <person name="Ellis T.M."/>
            <person name="Dyrting K.C."/>
            <person name="Krauss S."/>
            <person name="Zhang L.J."/>
            <person name="Webster R.G."/>
            <person name="Shortridge K.F."/>
        </authorList>
    </citation>
    <scope>NUCLEOTIDE SEQUENCE [GENOMIC RNA]</scope>
</reference>
<reference key="2">
    <citation type="submission" date="2008-03" db="EMBL/GenBank/DDBJ databases">
        <authorList>
            <person name="Li K.S."/>
            <person name="Xu K.M."/>
            <person name="Guan Y."/>
        </authorList>
    </citation>
    <scope>SEQUENCE REVISION</scope>
</reference>
<proteinExistence type="evidence at protein level"/>
<organismHost>
    <name type="scientific">Aves</name>
    <dbReference type="NCBI Taxonomy" id="8782"/>
</organismHost>
<organismHost>
    <name type="scientific">Felis catus</name>
    <name type="common">Cat</name>
    <name type="synonym">Felis silvestris catus</name>
    <dbReference type="NCBI Taxonomy" id="9685"/>
</organismHost>
<organismHost>
    <name type="scientific">Homo sapiens</name>
    <name type="common">Human</name>
    <dbReference type="NCBI Taxonomy" id="9606"/>
</organismHost>
<organismHost>
    <name type="scientific">Panthera pardus</name>
    <name type="common">Leopard</name>
    <name type="synonym">Felis pardus</name>
    <dbReference type="NCBI Taxonomy" id="9691"/>
</organismHost>
<organismHost>
    <name type="scientific">Panthera tigris</name>
    <name type="common">Tiger</name>
    <dbReference type="NCBI Taxonomy" id="9694"/>
</organismHost>
<organismHost>
    <name type="scientific">Sus scrofa</name>
    <name type="common">Pig</name>
    <dbReference type="NCBI Taxonomy" id="9823"/>
</organismHost>
<keyword id="KW-0002">3D-structure</keyword>
<keyword id="KW-1157">Cap snatching</keyword>
<keyword id="KW-0255">Endonuclease</keyword>
<keyword id="KW-1262">Eukaryotic host gene expression shutoff by virus</keyword>
<keyword id="KW-1191">Eukaryotic host transcription shutoff by virus</keyword>
<keyword id="KW-1035">Host cytoplasm</keyword>
<keyword id="KW-1190">Host gene expression shutoff by virus</keyword>
<keyword id="KW-1048">Host nucleus</keyword>
<keyword id="KW-0945">Host-virus interaction</keyword>
<keyword id="KW-0378">Hydrolase</keyword>
<keyword id="KW-1104">Inhibition of host RNA polymerase II by virus</keyword>
<keyword id="KW-0464">Manganese</keyword>
<keyword id="KW-0479">Metal-binding</keyword>
<keyword id="KW-0540">Nuclease</keyword>
<keyword id="KW-0597">Phosphoprotein</keyword>
<keyword id="KW-0688">Ribosomal frameshifting</keyword>
<feature type="chain" id="PRO_0000311132" description="Polymerase acidic protein">
    <location>
        <begin position="1"/>
        <end position="716"/>
    </location>
</feature>
<feature type="short sequence motif" description="Nuclear localization signal 1 (NLS1)" evidence="1 2">
    <location>
        <begin position="124"/>
        <end position="139"/>
    </location>
</feature>
<feature type="short sequence motif" description="Nuclear localization signal 2 (NLS2)" evidence="1 2">
    <location>
        <begin position="184"/>
        <end position="247"/>
    </location>
</feature>
<feature type="binding site" evidence="2">
    <location>
        <position position="41"/>
    </location>
    <ligand>
        <name>Mn(2+)</name>
        <dbReference type="ChEBI" id="CHEBI:29035"/>
        <label>1</label>
    </ligand>
</feature>
<feature type="binding site" evidence="2">
    <location>
        <position position="80"/>
    </location>
    <ligand>
        <name>Mn(2+)</name>
        <dbReference type="ChEBI" id="CHEBI:29035"/>
        <label>2</label>
    </ligand>
</feature>
<feature type="binding site" evidence="2">
    <location>
        <position position="108"/>
    </location>
    <ligand>
        <name>Mn(2+)</name>
        <dbReference type="ChEBI" id="CHEBI:29035"/>
        <label>1</label>
    </ligand>
</feature>
<feature type="binding site" evidence="2">
    <location>
        <position position="108"/>
    </location>
    <ligand>
        <name>Mn(2+)</name>
        <dbReference type="ChEBI" id="CHEBI:29035"/>
        <label>2</label>
    </ligand>
</feature>
<feature type="binding site" evidence="2">
    <location>
        <position position="119"/>
    </location>
    <ligand>
        <name>Mn(2+)</name>
        <dbReference type="ChEBI" id="CHEBI:29035"/>
        <label>1</label>
    </ligand>
</feature>
<feature type="binding site" evidence="2">
    <location>
        <position position="120"/>
    </location>
    <ligand>
        <name>Mn(2+)</name>
        <dbReference type="ChEBI" id="CHEBI:29035"/>
        <label>1</label>
    </ligand>
</feature>
<accession>Q809J3</accession>
<organism>
    <name type="scientific">Influenza A virus (strain A/Chicken/Hong Kong/715.5/2001 H5N1 genotype E)</name>
    <dbReference type="NCBI Taxonomy" id="196434"/>
    <lineage>
        <taxon>Viruses</taxon>
        <taxon>Riboviria</taxon>
        <taxon>Orthornavirae</taxon>
        <taxon>Negarnaviricota</taxon>
        <taxon>Polyploviricotina</taxon>
        <taxon>Insthoviricetes</taxon>
        <taxon>Articulavirales</taxon>
        <taxon>Orthomyxoviridae</taxon>
        <taxon>Alphainfluenzavirus</taxon>
        <taxon>Alphainfluenzavirus influenzae</taxon>
        <taxon>Influenza A virus</taxon>
    </lineage>
</organism>
<name>PA_I01A3</name>
<sequence>MEDFVRQCFNPMIVELAEKAMKEYGEDPKIETNKFAAICTHLEVCFMYSDFHFIDERGESTIVESSDPNALLKHRFEIIEGRDRTMAWTVVNSICNTTGVEKPKFLPDLYDYKENRFIEIGVTRREVHTYYLEKANKIKSEKTHIHIFSFTGEEMATKADYTLDEESRARIKTRLYTIRQEMASRGLWDSFRQSERGEETIEERFEITGTMRRLADQSLPPNFSSLENFRAYVDGFEPNGCIEGKLSQMSKEVNARIEPFLKTTPRPLRLPDGPPCFQRSKFLLMDALKLSIEDPSHEGEGIPLYDAIKCMKTFFGWKEPNIVKPHEKGINPNYLLAWKQVLAELQDIENEEKIPKTKNMRKTSQLKWALGEKMAPEKVDFEDCKDVSDLRQYDSDEPQPRSLASWIQSEFNKACELTDSSWIELDEIGEDVAPIEHIASMRRNYFTAEVSHCRATEYIMKGVYINTALLNASCAAMDDFQLIPMISKCRTKEGRRKTNLYGFIIKGRSHLRNDTDVVNFVSMEFSLTDPRLEPHKWEKYCILEIGDMLLRTAIGQVSRPMFLYVRTNGTSKIKMKWGMEMRRCLLQSLQQIESMIEAESSVKEKDMTREFFENKSETWPIGESPKGMEEGSIGKVCRTLLAKSVFNSLYASPQLEGFSAESRKLLLVVQALRDNLEPGTFDLGGLYEAIEECLINDPWVLLNASWFNSFLTHALK</sequence>
<gene>
    <name evidence="2" type="primary">PA</name>
</gene>
<evidence type="ECO:0000250" key="1">
    <source>
        <dbReference type="UniProtKB" id="P03433"/>
    </source>
</evidence>
<evidence type="ECO:0000255" key="2">
    <source>
        <dbReference type="HAMAP-Rule" id="MF_04063"/>
    </source>
</evidence>